<gene>
    <name type="primary">Rapgef4</name>
    <name type="synonym">Cgef2</name>
    <name type="synonym">Epac2</name>
</gene>
<dbReference type="EMBL" id="AF115480">
    <property type="protein sequence ID" value="AAD09132.1"/>
    <property type="molecule type" value="mRNA"/>
</dbReference>
<dbReference type="EMBL" id="AB021132">
    <property type="protein sequence ID" value="BAB18976.1"/>
    <property type="molecule type" value="mRNA"/>
</dbReference>
<dbReference type="EMBL" id="AB037668">
    <property type="protein sequence ID" value="BAB72180.1"/>
    <property type="molecule type" value="mRNA"/>
</dbReference>
<dbReference type="EMBL" id="AK004874">
    <property type="protein sequence ID" value="BAB23633.1"/>
    <property type="molecule type" value="mRNA"/>
</dbReference>
<dbReference type="CCDS" id="CCDS16120.1">
    <molecule id="Q9EQZ6-3"/>
</dbReference>
<dbReference type="CCDS" id="CCDS57176.1">
    <molecule id="Q9EQZ6-1"/>
</dbReference>
<dbReference type="RefSeq" id="NP_001191094.1">
    <molecule id="Q9EQZ6-1"/>
    <property type="nucleotide sequence ID" value="NM_001204165.1"/>
</dbReference>
<dbReference type="RefSeq" id="NP_001191095.1">
    <property type="nucleotide sequence ID" value="NM_001204166.1"/>
</dbReference>
<dbReference type="RefSeq" id="NP_062662.1">
    <molecule id="Q9EQZ6-3"/>
    <property type="nucleotide sequence ID" value="NM_019688.2"/>
</dbReference>
<dbReference type="PDB" id="1O7F">
    <property type="method" value="X-ray"/>
    <property type="resolution" value="2.50 A"/>
    <property type="chains" value="A=1-481"/>
</dbReference>
<dbReference type="PDB" id="2BYV">
    <property type="method" value="X-ray"/>
    <property type="resolution" value="2.70 A"/>
    <property type="chains" value="E=1-1011"/>
</dbReference>
<dbReference type="PDB" id="3CF6">
    <property type="method" value="X-ray"/>
    <property type="resolution" value="2.20 A"/>
    <property type="chains" value="E=324-1011"/>
</dbReference>
<dbReference type="PDB" id="4F7Z">
    <property type="method" value="X-ray"/>
    <property type="resolution" value="2.60 A"/>
    <property type="chains" value="A=1-1011"/>
</dbReference>
<dbReference type="PDB" id="4MGI">
    <property type="method" value="X-ray"/>
    <property type="resolution" value="2.80 A"/>
    <property type="chains" value="E=324-1011"/>
</dbReference>
<dbReference type="PDB" id="4MGK">
    <property type="method" value="X-ray"/>
    <property type="resolution" value="2.70 A"/>
    <property type="chains" value="E=324-1011"/>
</dbReference>
<dbReference type="PDB" id="4MGY">
    <property type="method" value="X-ray"/>
    <property type="resolution" value="2.60 A"/>
    <property type="chains" value="E=324-1011"/>
</dbReference>
<dbReference type="PDB" id="4MGZ">
    <property type="method" value="X-ray"/>
    <property type="resolution" value="3.00 A"/>
    <property type="chains" value="E=324-1011"/>
</dbReference>
<dbReference type="PDB" id="4MH0">
    <property type="method" value="X-ray"/>
    <property type="resolution" value="2.40 A"/>
    <property type="chains" value="E=324-1011"/>
</dbReference>
<dbReference type="PDBsum" id="1O7F"/>
<dbReference type="PDBsum" id="2BYV"/>
<dbReference type="PDBsum" id="3CF6"/>
<dbReference type="PDBsum" id="4F7Z"/>
<dbReference type="PDBsum" id="4MGI"/>
<dbReference type="PDBsum" id="4MGK"/>
<dbReference type="PDBsum" id="4MGY"/>
<dbReference type="PDBsum" id="4MGZ"/>
<dbReference type="PDBsum" id="4MH0"/>
<dbReference type="SASBDB" id="Q9EQZ6"/>
<dbReference type="SMR" id="Q9EQZ6"/>
<dbReference type="BioGRID" id="208026">
    <property type="interactions" value="26"/>
</dbReference>
<dbReference type="CORUM" id="Q9EQZ6"/>
<dbReference type="DIP" id="DIP-32333N"/>
<dbReference type="FunCoup" id="Q9EQZ6">
    <property type="interactions" value="922"/>
</dbReference>
<dbReference type="IntAct" id="Q9EQZ6">
    <property type="interactions" value="8"/>
</dbReference>
<dbReference type="MINT" id="Q9EQZ6"/>
<dbReference type="STRING" id="10090.ENSMUSP00000088336"/>
<dbReference type="BindingDB" id="Q9EQZ6"/>
<dbReference type="ChEMBL" id="CHEMBL3593151"/>
<dbReference type="GlyGen" id="Q9EQZ6">
    <property type="glycosylation" value="2 sites, 1 O-linked glycan (1 site)"/>
</dbReference>
<dbReference type="iPTMnet" id="Q9EQZ6"/>
<dbReference type="MetOSite" id="Q9EQZ6"/>
<dbReference type="PhosphoSitePlus" id="Q9EQZ6"/>
<dbReference type="SwissPalm" id="Q9EQZ6"/>
<dbReference type="PaxDb" id="10090-ENSMUSP00000099759"/>
<dbReference type="PeptideAtlas" id="Q9EQZ6"/>
<dbReference type="ProteomicsDB" id="299872">
    <molecule id="Q9EQZ6-1"/>
</dbReference>
<dbReference type="ProteomicsDB" id="299873">
    <molecule id="Q9EQZ6-2"/>
</dbReference>
<dbReference type="ProteomicsDB" id="299874">
    <molecule id="Q9EQZ6-3"/>
</dbReference>
<dbReference type="Antibodypedia" id="3825">
    <property type="antibodies" value="176 antibodies from 33 providers"/>
</dbReference>
<dbReference type="DNASU" id="56508"/>
<dbReference type="Ensembl" id="ENSMUST00000090826.12">
    <molecule id="Q9EQZ6-1"/>
    <property type="protein sequence ID" value="ENSMUSP00000088336.6"/>
    <property type="gene ID" value="ENSMUSG00000049044.17"/>
</dbReference>
<dbReference type="Ensembl" id="ENSMUST00000102698.10">
    <molecule id="Q9EQZ6-3"/>
    <property type="protein sequence ID" value="ENSMUSP00000099759.4"/>
    <property type="gene ID" value="ENSMUSG00000049044.17"/>
</dbReference>
<dbReference type="GeneID" id="56508"/>
<dbReference type="KEGG" id="mmu:56508"/>
<dbReference type="UCSC" id="uc008kbn.2">
    <molecule id="Q9EQZ6-1"/>
    <property type="organism name" value="mouse"/>
</dbReference>
<dbReference type="UCSC" id="uc008kbo.2">
    <molecule id="Q9EQZ6-3"/>
    <property type="organism name" value="mouse"/>
</dbReference>
<dbReference type="AGR" id="MGI:1917723"/>
<dbReference type="CTD" id="11069"/>
<dbReference type="MGI" id="MGI:1917723">
    <property type="gene designation" value="Rapgef4"/>
</dbReference>
<dbReference type="VEuPathDB" id="HostDB:ENSMUSG00000049044"/>
<dbReference type="eggNOG" id="KOG2378">
    <property type="taxonomic scope" value="Eukaryota"/>
</dbReference>
<dbReference type="GeneTree" id="ENSGT00940000156075"/>
<dbReference type="InParanoid" id="Q9EQZ6"/>
<dbReference type="OMA" id="CVRLCCV"/>
<dbReference type="OrthoDB" id="21144at2759"/>
<dbReference type="PhylomeDB" id="Q9EQZ6"/>
<dbReference type="TreeFam" id="TF313184"/>
<dbReference type="Reactome" id="R-MMU-354192">
    <property type="pathway name" value="Integrin signaling"/>
</dbReference>
<dbReference type="Reactome" id="R-MMU-381676">
    <property type="pathway name" value="Glucagon-like Peptide-1 (GLP1) regulates insulin secretion"/>
</dbReference>
<dbReference type="Reactome" id="R-MMU-392517">
    <property type="pathway name" value="Rap1 signalling"/>
</dbReference>
<dbReference type="Reactome" id="R-MMU-422356">
    <property type="pathway name" value="Regulation of insulin secretion"/>
</dbReference>
<dbReference type="BioGRID-ORCS" id="56508">
    <property type="hits" value="3 hits in 79 CRISPR screens"/>
</dbReference>
<dbReference type="CD-CODE" id="CE726F99">
    <property type="entry name" value="Postsynaptic density"/>
</dbReference>
<dbReference type="ChiTaRS" id="Rapgef4">
    <property type="organism name" value="mouse"/>
</dbReference>
<dbReference type="EvolutionaryTrace" id="Q9EQZ6"/>
<dbReference type="PRO" id="PR:Q9EQZ6"/>
<dbReference type="Proteomes" id="UP000000589">
    <property type="component" value="Chromosome 2"/>
</dbReference>
<dbReference type="RNAct" id="Q9EQZ6">
    <property type="molecule type" value="protein"/>
</dbReference>
<dbReference type="Bgee" id="ENSMUSG00000049044">
    <property type="expression patterns" value="Expressed in globus pallidus and 207 other cell types or tissues"/>
</dbReference>
<dbReference type="ExpressionAtlas" id="Q9EQZ6">
    <property type="expression patterns" value="baseline and differential"/>
</dbReference>
<dbReference type="GO" id="GO:0005829">
    <property type="term" value="C:cytosol"/>
    <property type="evidence" value="ECO:0000314"/>
    <property type="project" value="MGI"/>
</dbReference>
<dbReference type="GO" id="GO:0098686">
    <property type="term" value="C:hippocampal mossy fiber to CA3 synapse"/>
    <property type="evidence" value="ECO:0000314"/>
    <property type="project" value="SynGO"/>
</dbReference>
<dbReference type="GO" id="GO:0016020">
    <property type="term" value="C:membrane"/>
    <property type="evidence" value="ECO:0007669"/>
    <property type="project" value="UniProtKB-SubCell"/>
</dbReference>
<dbReference type="GO" id="GO:0030552">
    <property type="term" value="F:cAMP binding"/>
    <property type="evidence" value="ECO:0000314"/>
    <property type="project" value="UniProtKB"/>
</dbReference>
<dbReference type="GO" id="GO:0005085">
    <property type="term" value="F:guanyl-nucleotide exchange factor activity"/>
    <property type="evidence" value="ECO:0000314"/>
    <property type="project" value="UniProtKB"/>
</dbReference>
<dbReference type="GO" id="GO:0030674">
    <property type="term" value="F:protein-macromolecule adaptor activity"/>
    <property type="evidence" value="ECO:0000314"/>
    <property type="project" value="MGI"/>
</dbReference>
<dbReference type="GO" id="GO:0031267">
    <property type="term" value="F:small GTPase binding"/>
    <property type="evidence" value="ECO:0000353"/>
    <property type="project" value="UniProtKB"/>
</dbReference>
<dbReference type="GO" id="GO:0007189">
    <property type="term" value="P:adenylate cyclase-activating G protein-coupled receptor signaling pathway"/>
    <property type="evidence" value="ECO:0000314"/>
    <property type="project" value="MGI"/>
</dbReference>
<dbReference type="GO" id="GO:0007188">
    <property type="term" value="P:adenylate cyclase-modulating G protein-coupled receptor signaling pathway"/>
    <property type="evidence" value="ECO:0000314"/>
    <property type="project" value="MGI"/>
</dbReference>
<dbReference type="GO" id="GO:0017156">
    <property type="term" value="P:calcium-ion regulated exocytosis"/>
    <property type="evidence" value="ECO:0000314"/>
    <property type="project" value="MGI"/>
</dbReference>
<dbReference type="GO" id="GO:0046879">
    <property type="term" value="P:hormone secretion"/>
    <property type="evidence" value="ECO:0000315"/>
    <property type="project" value="MGI"/>
</dbReference>
<dbReference type="GO" id="GO:0030073">
    <property type="term" value="P:insulin secretion"/>
    <property type="evidence" value="ECO:0000314"/>
    <property type="project" value="MGI"/>
</dbReference>
<dbReference type="GO" id="GO:0032024">
    <property type="term" value="P:positive regulation of insulin secretion"/>
    <property type="evidence" value="ECO:0000315"/>
    <property type="project" value="MGI"/>
</dbReference>
<dbReference type="GO" id="GO:0017157">
    <property type="term" value="P:regulation of exocytosis"/>
    <property type="evidence" value="ECO:0000314"/>
    <property type="project" value="MGI"/>
</dbReference>
<dbReference type="GO" id="GO:0098693">
    <property type="term" value="P:regulation of synaptic vesicle cycle"/>
    <property type="evidence" value="ECO:0000314"/>
    <property type="project" value="SynGO"/>
</dbReference>
<dbReference type="GO" id="GO:0007264">
    <property type="term" value="P:small GTPase-mediated signal transduction"/>
    <property type="evidence" value="ECO:0007669"/>
    <property type="project" value="InterPro"/>
</dbReference>
<dbReference type="CDD" id="cd00038">
    <property type="entry name" value="CAP_ED"/>
    <property type="match status" value="2"/>
</dbReference>
<dbReference type="CDD" id="cd04437">
    <property type="entry name" value="DEP_Epac"/>
    <property type="match status" value="1"/>
</dbReference>
<dbReference type="CDD" id="cd00155">
    <property type="entry name" value="RasGEF"/>
    <property type="match status" value="1"/>
</dbReference>
<dbReference type="CDD" id="cd06224">
    <property type="entry name" value="REM"/>
    <property type="match status" value="1"/>
</dbReference>
<dbReference type="FunFam" id="1.10.8.1240:FF:000001">
    <property type="entry name" value="Rap guanine nucleotide exchange factor (GEF) 4"/>
    <property type="match status" value="1"/>
</dbReference>
<dbReference type="FunFam" id="1.10.10.10:FF:000096">
    <property type="entry name" value="Rap guanine nucleotide exchange factor 4"/>
    <property type="match status" value="1"/>
</dbReference>
<dbReference type="FunFam" id="1.10.840.10:FF:000002">
    <property type="entry name" value="Rap guanine nucleotide exchange factor 4"/>
    <property type="match status" value="1"/>
</dbReference>
<dbReference type="FunFam" id="1.20.870.10:FF:000005">
    <property type="entry name" value="Rap guanine nucleotide exchange factor 4"/>
    <property type="match status" value="1"/>
</dbReference>
<dbReference type="FunFam" id="2.60.120.10:FF:000015">
    <property type="entry name" value="Rap guanine nucleotide exchange factor 4"/>
    <property type="match status" value="1"/>
</dbReference>
<dbReference type="FunFam" id="2.60.120.10:FF:000052">
    <property type="entry name" value="Rap guanine nucleotide exchange factor 4"/>
    <property type="match status" value="1"/>
</dbReference>
<dbReference type="FunFam" id="3.10.20.90:FF:000038">
    <property type="entry name" value="Rap guanine nucleotide exchange factor 4"/>
    <property type="match status" value="1"/>
</dbReference>
<dbReference type="Gene3D" id="1.10.8.1240">
    <property type="match status" value="1"/>
</dbReference>
<dbReference type="Gene3D" id="2.60.120.10">
    <property type="entry name" value="Jelly Rolls"/>
    <property type="match status" value="2"/>
</dbReference>
<dbReference type="Gene3D" id="3.10.20.90">
    <property type="entry name" value="Phosphatidylinositol 3-kinase Catalytic Subunit, Chain A, domain 1"/>
    <property type="match status" value="1"/>
</dbReference>
<dbReference type="Gene3D" id="1.10.840.10">
    <property type="entry name" value="Ras guanine-nucleotide exchange factors catalytic domain"/>
    <property type="match status" value="1"/>
</dbReference>
<dbReference type="Gene3D" id="1.20.870.10">
    <property type="entry name" value="Son of sevenless (SoS) protein Chain: S domain 1"/>
    <property type="match status" value="1"/>
</dbReference>
<dbReference type="Gene3D" id="1.10.10.10">
    <property type="entry name" value="Winged helix-like DNA-binding domain superfamily/Winged helix DNA-binding domain"/>
    <property type="match status" value="1"/>
</dbReference>
<dbReference type="InterPro" id="IPR000595">
    <property type="entry name" value="cNMP-bd_dom"/>
</dbReference>
<dbReference type="InterPro" id="IPR018490">
    <property type="entry name" value="cNMP-bd_dom_sf"/>
</dbReference>
<dbReference type="InterPro" id="IPR000591">
    <property type="entry name" value="DEP_dom"/>
</dbReference>
<dbReference type="InterPro" id="IPR008937">
    <property type="entry name" value="Ras-like_GEF"/>
</dbReference>
<dbReference type="InterPro" id="IPR000651">
    <property type="entry name" value="Ras-like_Gua-exchang_fac_N"/>
</dbReference>
<dbReference type="InterPro" id="IPR019804">
    <property type="entry name" value="Ras_G-nucl-exch_fac_CS"/>
</dbReference>
<dbReference type="InterPro" id="IPR023578">
    <property type="entry name" value="Ras_GEF_dom_sf"/>
</dbReference>
<dbReference type="InterPro" id="IPR001895">
    <property type="entry name" value="RASGEF_cat_dom"/>
</dbReference>
<dbReference type="InterPro" id="IPR036964">
    <property type="entry name" value="RASGEF_cat_dom_sf"/>
</dbReference>
<dbReference type="InterPro" id="IPR014710">
    <property type="entry name" value="RmlC-like_jellyroll"/>
</dbReference>
<dbReference type="InterPro" id="IPR029071">
    <property type="entry name" value="Ubiquitin-like_domsf"/>
</dbReference>
<dbReference type="InterPro" id="IPR036388">
    <property type="entry name" value="WH-like_DNA-bd_sf"/>
</dbReference>
<dbReference type="InterPro" id="IPR036390">
    <property type="entry name" value="WH_DNA-bd_sf"/>
</dbReference>
<dbReference type="PANTHER" id="PTHR23113">
    <property type="entry name" value="GUANINE NUCLEOTIDE EXCHANGE FACTOR"/>
    <property type="match status" value="1"/>
</dbReference>
<dbReference type="PANTHER" id="PTHR23113:SF175">
    <property type="entry name" value="RAP GUANINE NUCLEOTIDE EXCHANGE FACTOR 4"/>
    <property type="match status" value="1"/>
</dbReference>
<dbReference type="Pfam" id="PF00027">
    <property type="entry name" value="cNMP_binding"/>
    <property type="match status" value="2"/>
</dbReference>
<dbReference type="Pfam" id="PF00610">
    <property type="entry name" value="DEP"/>
    <property type="match status" value="1"/>
</dbReference>
<dbReference type="Pfam" id="PF00617">
    <property type="entry name" value="RasGEF"/>
    <property type="match status" value="1"/>
</dbReference>
<dbReference type="Pfam" id="PF00618">
    <property type="entry name" value="RasGEF_N"/>
    <property type="match status" value="1"/>
</dbReference>
<dbReference type="PRINTS" id="PR00103">
    <property type="entry name" value="CAMPKINASE"/>
</dbReference>
<dbReference type="SMART" id="SM00100">
    <property type="entry name" value="cNMP"/>
    <property type="match status" value="2"/>
</dbReference>
<dbReference type="SMART" id="SM00049">
    <property type="entry name" value="DEP"/>
    <property type="match status" value="1"/>
</dbReference>
<dbReference type="SMART" id="SM00147">
    <property type="entry name" value="RasGEF"/>
    <property type="match status" value="1"/>
</dbReference>
<dbReference type="SMART" id="SM00229">
    <property type="entry name" value="RasGEFN"/>
    <property type="match status" value="1"/>
</dbReference>
<dbReference type="SUPFAM" id="SSF51206">
    <property type="entry name" value="cAMP-binding domain-like"/>
    <property type="match status" value="2"/>
</dbReference>
<dbReference type="SUPFAM" id="SSF48366">
    <property type="entry name" value="Ras GEF"/>
    <property type="match status" value="1"/>
</dbReference>
<dbReference type="SUPFAM" id="SSF54236">
    <property type="entry name" value="Ubiquitin-like"/>
    <property type="match status" value="1"/>
</dbReference>
<dbReference type="SUPFAM" id="SSF46785">
    <property type="entry name" value="Winged helix' DNA-binding domain"/>
    <property type="match status" value="1"/>
</dbReference>
<dbReference type="PROSITE" id="PS50042">
    <property type="entry name" value="CNMP_BINDING_3"/>
    <property type="match status" value="2"/>
</dbReference>
<dbReference type="PROSITE" id="PS50186">
    <property type="entry name" value="DEP"/>
    <property type="match status" value="1"/>
</dbReference>
<dbReference type="PROSITE" id="PS00720">
    <property type="entry name" value="RASGEF"/>
    <property type="match status" value="1"/>
</dbReference>
<dbReference type="PROSITE" id="PS50009">
    <property type="entry name" value="RASGEF_CAT"/>
    <property type="match status" value="1"/>
</dbReference>
<dbReference type="PROSITE" id="PS50212">
    <property type="entry name" value="RASGEF_NTER"/>
    <property type="match status" value="1"/>
</dbReference>
<name>RPGF4_MOUSE</name>
<keyword id="KW-0002">3D-structure</keyword>
<keyword id="KW-0877">Alternative promoter usage</keyword>
<keyword id="KW-0025">Alternative splicing</keyword>
<keyword id="KW-0114">cAMP</keyword>
<keyword id="KW-0116">cAMP-binding</keyword>
<keyword id="KW-0963">Cytoplasm</keyword>
<keyword id="KW-0268">Exocytosis</keyword>
<keyword id="KW-0344">Guanine-nucleotide releasing factor</keyword>
<keyword id="KW-0472">Membrane</keyword>
<keyword id="KW-0547">Nucleotide-binding</keyword>
<keyword id="KW-1185">Reference proteome</keyword>
<keyword id="KW-0677">Repeat</keyword>
<protein>
    <recommendedName>
        <fullName>Rap guanine nucleotide exchange factor 4</fullName>
    </recommendedName>
    <alternativeName>
        <fullName>Exchange factor directly activated by cAMP 2</fullName>
    </alternativeName>
    <alternativeName>
        <fullName>Exchange protein directly activated by cAMP 2</fullName>
        <shortName>EPAC 2</shortName>
    </alternativeName>
    <alternativeName>
        <fullName>cAMP-dependent Rap1 guanine-nucleotide exchange factor</fullName>
    </alternativeName>
    <alternativeName>
        <fullName>cAMP-regulated guanine nucleotide exchange factor II</fullName>
        <shortName>cAMP-GEFII</shortName>
    </alternativeName>
</protein>
<feature type="chain" id="PRO_0000068871" description="Rap guanine nucleotide exchange factor 4">
    <location>
        <begin position="1"/>
        <end position="1011"/>
    </location>
</feature>
<feature type="domain" description="DEP" evidence="3">
    <location>
        <begin position="216"/>
        <end position="291"/>
    </location>
</feature>
<feature type="domain" description="N-terminal Ras-GEF" evidence="4">
    <location>
        <begin position="496"/>
        <end position="634"/>
    </location>
</feature>
<feature type="domain" description="Ras-GEF" evidence="5">
    <location>
        <begin position="772"/>
        <end position="1009"/>
    </location>
</feature>
<feature type="binding site" evidence="2">
    <location>
        <begin position="422"/>
        <end position="425"/>
    </location>
    <ligand>
        <name>3',5'-cyclic AMP</name>
        <dbReference type="ChEBI" id="CHEBI:58165"/>
    </ligand>
</feature>
<feature type="binding site" evidence="2">
    <location>
        <begin position="432"/>
        <end position="433"/>
    </location>
    <ligand>
        <name>3',5'-cyclic AMP</name>
        <dbReference type="ChEBI" id="CHEBI:58165"/>
    </ligand>
</feature>
<feature type="splice variant" id="VSP_007614" description="In isoform 2." evidence="8 9">
    <location>
        <begin position="1"/>
        <end position="315"/>
    </location>
</feature>
<feature type="splice variant" id="VSP_007615" description="In isoform 3." evidence="10">
    <location>
        <begin position="180"/>
        <end position="197"/>
    </location>
</feature>
<feature type="mutagenesis site" description="Less than 10% of the wild-type maximal activity." evidence="7">
    <original>L</original>
    <variation>A</variation>
    <location>
        <position position="467"/>
    </location>
</feature>
<feature type="mutagenesis site" description="2-fold reduction in maximal activity." evidence="7">
    <original>Y</original>
    <variation>F</variation>
    <location>
        <position position="498"/>
    </location>
</feature>
<feature type="mutagenesis site" description="2-fold reduction in maximal activity." evidence="7">
    <original>Y</original>
    <variation>A</variation>
    <location>
        <position position="569"/>
    </location>
</feature>
<feature type="mutagenesis site" description="2-fold reduction in maximal activity." evidence="7">
    <original>Y</original>
    <variation>F</variation>
    <location>
        <position position="569"/>
    </location>
</feature>
<feature type="sequence conflict" description="In Ref. 4; BAB23633." evidence="11" ref="4">
    <original>Q</original>
    <variation>E</variation>
    <location>
        <position position="313"/>
    </location>
</feature>
<feature type="sequence conflict" description="In Ref. 4; BAB23633." evidence="11" ref="4">
    <original>D</original>
    <variation>E</variation>
    <location>
        <position position="452"/>
    </location>
</feature>
<feature type="helix" evidence="12">
    <location>
        <begin position="14"/>
        <end position="19"/>
    </location>
</feature>
<feature type="strand" evidence="14">
    <location>
        <begin position="23"/>
        <end position="25"/>
    </location>
</feature>
<feature type="helix" evidence="12">
    <location>
        <begin position="28"/>
        <end position="38"/>
    </location>
</feature>
<feature type="turn" evidence="12">
    <location>
        <begin position="42"/>
        <end position="46"/>
    </location>
</feature>
<feature type="helix" evidence="12">
    <location>
        <begin position="49"/>
        <end position="58"/>
    </location>
</feature>
<feature type="strand" evidence="12">
    <location>
        <begin position="60"/>
        <end position="64"/>
    </location>
</feature>
<feature type="strand" evidence="12">
    <location>
        <begin position="69"/>
        <end position="71"/>
    </location>
</feature>
<feature type="strand" evidence="12">
    <location>
        <begin position="79"/>
        <end position="86"/>
    </location>
</feature>
<feature type="strand" evidence="12">
    <location>
        <begin position="88"/>
        <end position="92"/>
    </location>
</feature>
<feature type="strand" evidence="12">
    <location>
        <begin position="94"/>
        <end position="96"/>
    </location>
</feature>
<feature type="helix" evidence="12">
    <location>
        <begin position="98"/>
        <end position="100"/>
    </location>
</feature>
<feature type="strand" evidence="12">
    <location>
        <begin position="102"/>
        <end position="107"/>
    </location>
</feature>
<feature type="helix" evidence="12">
    <location>
        <begin position="115"/>
        <end position="119"/>
    </location>
</feature>
<feature type="strand" evidence="12">
    <location>
        <begin position="124"/>
        <end position="139"/>
    </location>
</feature>
<feature type="helix" evidence="12">
    <location>
        <begin position="140"/>
        <end position="150"/>
    </location>
</feature>
<feature type="helix" evidence="12">
    <location>
        <begin position="151"/>
        <end position="153"/>
    </location>
</feature>
<feature type="turn" evidence="12">
    <location>
        <begin position="154"/>
        <end position="157"/>
    </location>
</feature>
<feature type="turn" evidence="12">
    <location>
        <begin position="160"/>
        <end position="162"/>
    </location>
</feature>
<feature type="helix" evidence="12">
    <location>
        <begin position="202"/>
        <end position="217"/>
    </location>
</feature>
<feature type="helix" evidence="12">
    <location>
        <begin position="219"/>
        <end position="221"/>
    </location>
</feature>
<feature type="strand" evidence="12">
    <location>
        <begin position="222"/>
        <end position="226"/>
    </location>
</feature>
<feature type="strand" evidence="12">
    <location>
        <begin position="231"/>
        <end position="237"/>
    </location>
</feature>
<feature type="helix" evidence="12">
    <location>
        <begin position="238"/>
        <end position="247"/>
    </location>
</feature>
<feature type="strand" evidence="12">
    <location>
        <begin position="248"/>
        <end position="250"/>
    </location>
</feature>
<feature type="helix" evidence="12">
    <location>
        <begin position="255"/>
        <end position="267"/>
    </location>
</feature>
<feature type="strand" evidence="12">
    <location>
        <begin position="270"/>
        <end position="275"/>
    </location>
</feature>
<feature type="strand" evidence="12">
    <location>
        <begin position="282"/>
        <end position="284"/>
    </location>
</feature>
<feature type="strand" evidence="12">
    <location>
        <begin position="286"/>
        <end position="289"/>
    </location>
</feature>
<feature type="helix" evidence="12">
    <location>
        <begin position="290"/>
        <end position="292"/>
    </location>
</feature>
<feature type="strand" evidence="12">
    <location>
        <begin position="293"/>
        <end position="296"/>
    </location>
</feature>
<feature type="helix" evidence="12">
    <location>
        <begin position="303"/>
        <end position="310"/>
    </location>
</feature>
<feature type="helix" evidence="16">
    <location>
        <begin position="329"/>
        <end position="333"/>
    </location>
</feature>
<feature type="helix" evidence="16">
    <location>
        <begin position="336"/>
        <end position="338"/>
    </location>
</feature>
<feature type="helix" evidence="16">
    <location>
        <begin position="341"/>
        <end position="351"/>
    </location>
</feature>
<feature type="helix" evidence="12">
    <location>
        <begin position="355"/>
        <end position="357"/>
    </location>
</feature>
<feature type="helix" evidence="16">
    <location>
        <begin position="362"/>
        <end position="368"/>
    </location>
</feature>
<feature type="turn" evidence="16">
    <location>
        <begin position="369"/>
        <end position="371"/>
    </location>
</feature>
<feature type="strand" evidence="16">
    <location>
        <begin position="373"/>
        <end position="377"/>
    </location>
</feature>
<feature type="strand" evidence="16">
    <location>
        <begin position="383"/>
        <end position="385"/>
    </location>
</feature>
<feature type="strand" evidence="16">
    <location>
        <begin position="393"/>
        <end position="400"/>
    </location>
</feature>
<feature type="strand" evidence="16">
    <location>
        <begin position="402"/>
        <end position="406"/>
    </location>
</feature>
<feature type="turn" evidence="16">
    <location>
        <begin position="407"/>
        <end position="409"/>
    </location>
</feature>
<feature type="strand" evidence="16">
    <location>
        <begin position="410"/>
        <end position="415"/>
    </location>
</feature>
<feature type="helix" evidence="16">
    <location>
        <begin position="423"/>
        <end position="428"/>
    </location>
</feature>
<feature type="strand" evidence="16">
    <location>
        <begin position="433"/>
        <end position="438"/>
    </location>
</feature>
<feature type="strand" evidence="16">
    <location>
        <begin position="440"/>
        <end position="449"/>
    </location>
</feature>
<feature type="helix" evidence="16">
    <location>
        <begin position="450"/>
        <end position="456"/>
    </location>
</feature>
<feature type="turn" evidence="16">
    <location>
        <begin position="457"/>
        <end position="460"/>
    </location>
</feature>
<feature type="strand" evidence="16">
    <location>
        <begin position="465"/>
        <end position="469"/>
    </location>
</feature>
<feature type="strand" evidence="16">
    <location>
        <begin position="472"/>
        <end position="479"/>
    </location>
</feature>
<feature type="strand" evidence="16">
    <location>
        <begin position="498"/>
        <end position="503"/>
    </location>
</feature>
<feature type="helix" evidence="16">
    <location>
        <begin position="505"/>
        <end position="514"/>
    </location>
</feature>
<feature type="helix" evidence="16">
    <location>
        <begin position="520"/>
        <end position="522"/>
    </location>
</feature>
<feature type="helix" evidence="16">
    <location>
        <begin position="523"/>
        <end position="540"/>
    </location>
</feature>
<feature type="helix" evidence="16">
    <location>
        <begin position="543"/>
        <end position="554"/>
    </location>
</feature>
<feature type="strand" evidence="16">
    <location>
        <begin position="559"/>
        <end position="561"/>
    </location>
</feature>
<feature type="helix" evidence="16">
    <location>
        <begin position="563"/>
        <end position="588"/>
    </location>
</feature>
<feature type="helix" evidence="16">
    <location>
        <begin position="589"/>
        <end position="594"/>
    </location>
</feature>
<feature type="helix" evidence="16">
    <location>
        <begin position="596"/>
        <end position="616"/>
    </location>
</feature>
<feature type="helix" evidence="14">
    <location>
        <begin position="617"/>
        <end position="620"/>
    </location>
</feature>
<feature type="helix" evidence="16">
    <location>
        <begin position="622"/>
        <end position="629"/>
    </location>
</feature>
<feature type="strand" evidence="16">
    <location>
        <begin position="668"/>
        <end position="675"/>
    </location>
</feature>
<feature type="turn" evidence="13">
    <location>
        <begin position="677"/>
        <end position="679"/>
    </location>
</feature>
<feature type="strand" evidence="16">
    <location>
        <begin position="681"/>
        <end position="687"/>
    </location>
</feature>
<feature type="helix" evidence="16">
    <location>
        <begin position="692"/>
        <end position="703"/>
    </location>
</feature>
<feature type="strand" evidence="16">
    <location>
        <begin position="710"/>
        <end position="714"/>
    </location>
</feature>
<feature type="strand" evidence="16">
    <location>
        <begin position="720"/>
        <end position="722"/>
    </location>
</feature>
<feature type="helix" evidence="15">
    <location>
        <begin position="731"/>
        <end position="733"/>
    </location>
</feature>
<feature type="strand" evidence="16">
    <location>
        <begin position="739"/>
        <end position="743"/>
    </location>
</feature>
<feature type="helix" evidence="16">
    <location>
        <begin position="745"/>
        <end position="750"/>
    </location>
</feature>
<feature type="helix" evidence="16">
    <location>
        <begin position="755"/>
        <end position="757"/>
    </location>
</feature>
<feature type="helix" evidence="16">
    <location>
        <begin position="765"/>
        <end position="768"/>
    </location>
</feature>
<feature type="helix" evidence="16">
    <location>
        <begin position="773"/>
        <end position="789"/>
    </location>
</feature>
<feature type="helix" evidence="16">
    <location>
        <begin position="793"/>
        <end position="801"/>
    </location>
</feature>
<feature type="helix" evidence="16">
    <location>
        <begin position="803"/>
        <end position="805"/>
    </location>
</feature>
<feature type="helix" evidence="16">
    <location>
        <begin position="811"/>
        <end position="832"/>
    </location>
</feature>
<feature type="helix" evidence="16">
    <location>
        <begin position="837"/>
        <end position="856"/>
    </location>
</feature>
<feature type="helix" evidence="16">
    <location>
        <begin position="860"/>
        <end position="871"/>
    </location>
</feature>
<feature type="helix" evidence="16">
    <location>
        <begin position="873"/>
        <end position="876"/>
    </location>
</feature>
<feature type="helix" evidence="16">
    <location>
        <begin position="879"/>
        <end position="884"/>
    </location>
</feature>
<feature type="helix" evidence="16">
    <location>
        <begin position="887"/>
        <end position="898"/>
    </location>
</feature>
<feature type="helix" evidence="16">
    <location>
        <begin position="903"/>
        <end position="915"/>
    </location>
</feature>
<feature type="helix" evidence="16">
    <location>
        <begin position="924"/>
        <end position="937"/>
    </location>
</feature>
<feature type="strand" evidence="16">
    <location>
        <begin position="940"/>
        <end position="942"/>
    </location>
</feature>
<feature type="strand" evidence="16">
    <location>
        <begin position="945"/>
        <end position="947"/>
    </location>
</feature>
<feature type="helix" evidence="16">
    <location>
        <begin position="948"/>
        <end position="964"/>
    </location>
</feature>
<feature type="strand" evidence="13">
    <location>
        <begin position="965"/>
        <end position="967"/>
    </location>
</feature>
<feature type="strand" evidence="13">
    <location>
        <begin position="973"/>
        <end position="975"/>
    </location>
</feature>
<feature type="helix" evidence="16">
    <location>
        <begin position="981"/>
        <end position="987"/>
    </location>
</feature>
<feature type="helix" evidence="16">
    <location>
        <begin position="996"/>
        <end position="1006"/>
    </location>
</feature>
<evidence type="ECO:0000250" key="1"/>
<evidence type="ECO:0000250" key="2">
    <source>
        <dbReference type="UniProtKB" id="O95398"/>
    </source>
</evidence>
<evidence type="ECO:0000255" key="3">
    <source>
        <dbReference type="PROSITE-ProRule" id="PRU00066"/>
    </source>
</evidence>
<evidence type="ECO:0000255" key="4">
    <source>
        <dbReference type="PROSITE-ProRule" id="PRU00135"/>
    </source>
</evidence>
<evidence type="ECO:0000255" key="5">
    <source>
        <dbReference type="PROSITE-ProRule" id="PRU00168"/>
    </source>
</evidence>
<evidence type="ECO:0000269" key="6">
    <source>
    </source>
</evidence>
<evidence type="ECO:0000269" key="7">
    <source>
    </source>
</evidence>
<evidence type="ECO:0000303" key="8">
    <source>
    </source>
</evidence>
<evidence type="ECO:0000303" key="9">
    <source>
    </source>
</evidence>
<evidence type="ECO:0000303" key="10">
    <source ref="1"/>
</evidence>
<evidence type="ECO:0000305" key="11"/>
<evidence type="ECO:0007829" key="12">
    <source>
        <dbReference type="PDB" id="1O7F"/>
    </source>
</evidence>
<evidence type="ECO:0007829" key="13">
    <source>
        <dbReference type="PDB" id="2BYV"/>
    </source>
</evidence>
<evidence type="ECO:0007829" key="14">
    <source>
        <dbReference type="PDB" id="4F7Z"/>
    </source>
</evidence>
<evidence type="ECO:0007829" key="15">
    <source>
        <dbReference type="PDB" id="4MGY"/>
    </source>
</evidence>
<evidence type="ECO:0007829" key="16">
    <source>
        <dbReference type="PDB" id="4MH0"/>
    </source>
</evidence>
<organism>
    <name type="scientific">Mus musculus</name>
    <name type="common">Mouse</name>
    <dbReference type="NCBI Taxonomy" id="10090"/>
    <lineage>
        <taxon>Eukaryota</taxon>
        <taxon>Metazoa</taxon>
        <taxon>Chordata</taxon>
        <taxon>Craniata</taxon>
        <taxon>Vertebrata</taxon>
        <taxon>Euteleostomi</taxon>
        <taxon>Mammalia</taxon>
        <taxon>Eutheria</taxon>
        <taxon>Euarchontoglires</taxon>
        <taxon>Glires</taxon>
        <taxon>Rodentia</taxon>
        <taxon>Myomorpha</taxon>
        <taxon>Muroidea</taxon>
        <taxon>Muridae</taxon>
        <taxon>Murinae</taxon>
        <taxon>Mus</taxon>
        <taxon>Mus</taxon>
    </lineage>
</organism>
<accession>Q9EQZ6</accession>
<accession>Q8VIP9</accession>
<accession>Q9CW52</accession>
<accession>Q9Z1P0</accession>
<reference key="1">
    <citation type="submission" date="1998-12" db="EMBL/GenBank/DDBJ databases">
        <title>A brain cAMP-dependent Rap1 guanine-nucleotide exchange factor.</title>
        <authorList>
            <person name="Gaudriault G.E."/>
            <person name="Takaya K."/>
            <person name="Vale W.W."/>
        </authorList>
    </citation>
    <scope>NUCLEOTIDE SEQUENCE [MRNA] (ISOFORM 3)</scope>
    <source>
        <tissue>Brain</tissue>
    </source>
</reference>
<reference key="2">
    <citation type="journal article" date="2000" name="Nat. Cell Biol.">
        <title>cAMP-GEFII is a direct target of cAMP in regulated exocytosis.</title>
        <authorList>
            <person name="Ozaki N."/>
            <person name="Shibasaki T."/>
            <person name="Kashima Y."/>
            <person name="Miki T."/>
            <person name="Takahashi K."/>
            <person name="Ueno H."/>
            <person name="Sunaga Y."/>
            <person name="Yano H."/>
            <person name="Matsuura Y."/>
            <person name="Iwanaga T."/>
            <person name="Takai Y."/>
            <person name="Seino S."/>
        </authorList>
    </citation>
    <scope>NUCLEOTIDE SEQUENCE [MRNA] (ISOFORM 1)</scope>
    <scope>FUNCTION</scope>
    <scope>TISSUE SPECIFICITY</scope>
    <scope>INTERACTION WITH RIMS1 AND RIMS2</scope>
</reference>
<reference key="3">
    <citation type="journal article" date="2001" name="Genomics">
        <title>Characterization of the gene EPAC2: structure, chromosomal localization, tissue expression, and identification of the liver-specific isoform.</title>
        <authorList>
            <person name="Ueno H."/>
            <person name="Shibasaki T."/>
            <person name="Iwanaga T."/>
            <person name="Takahashi K."/>
            <person name="Yokoyama Y."/>
            <person name="Liu L.M."/>
            <person name="Yokoi N."/>
            <person name="Ozaki N."/>
            <person name="Matsukura S."/>
            <person name="Yano H."/>
            <person name="Seino S."/>
        </authorList>
    </citation>
    <scope>NUCLEOTIDE SEQUENCE [MRNA] (ISOFORM 2)</scope>
    <scope>ALTERNATIVE PROMOTER USAGE</scope>
    <source>
        <tissue>Liver</tissue>
    </source>
</reference>
<reference key="4">
    <citation type="journal article" date="2005" name="Science">
        <title>The transcriptional landscape of the mammalian genome.</title>
        <authorList>
            <person name="Carninci P."/>
            <person name="Kasukawa T."/>
            <person name="Katayama S."/>
            <person name="Gough J."/>
            <person name="Frith M.C."/>
            <person name="Maeda N."/>
            <person name="Oyama R."/>
            <person name="Ravasi T."/>
            <person name="Lenhard B."/>
            <person name="Wells C."/>
            <person name="Kodzius R."/>
            <person name="Shimokawa K."/>
            <person name="Bajic V.B."/>
            <person name="Brenner S.E."/>
            <person name="Batalov S."/>
            <person name="Forrest A.R."/>
            <person name="Zavolan M."/>
            <person name="Davis M.J."/>
            <person name="Wilming L.G."/>
            <person name="Aidinis V."/>
            <person name="Allen J.E."/>
            <person name="Ambesi-Impiombato A."/>
            <person name="Apweiler R."/>
            <person name="Aturaliya R.N."/>
            <person name="Bailey T.L."/>
            <person name="Bansal M."/>
            <person name="Baxter L."/>
            <person name="Beisel K.W."/>
            <person name="Bersano T."/>
            <person name="Bono H."/>
            <person name="Chalk A.M."/>
            <person name="Chiu K.P."/>
            <person name="Choudhary V."/>
            <person name="Christoffels A."/>
            <person name="Clutterbuck D.R."/>
            <person name="Crowe M.L."/>
            <person name="Dalla E."/>
            <person name="Dalrymple B.P."/>
            <person name="de Bono B."/>
            <person name="Della Gatta G."/>
            <person name="di Bernardo D."/>
            <person name="Down T."/>
            <person name="Engstrom P."/>
            <person name="Fagiolini M."/>
            <person name="Faulkner G."/>
            <person name="Fletcher C.F."/>
            <person name="Fukushima T."/>
            <person name="Furuno M."/>
            <person name="Futaki S."/>
            <person name="Gariboldi M."/>
            <person name="Georgii-Hemming P."/>
            <person name="Gingeras T.R."/>
            <person name="Gojobori T."/>
            <person name="Green R.E."/>
            <person name="Gustincich S."/>
            <person name="Harbers M."/>
            <person name="Hayashi Y."/>
            <person name="Hensch T.K."/>
            <person name="Hirokawa N."/>
            <person name="Hill D."/>
            <person name="Huminiecki L."/>
            <person name="Iacono M."/>
            <person name="Ikeo K."/>
            <person name="Iwama A."/>
            <person name="Ishikawa T."/>
            <person name="Jakt M."/>
            <person name="Kanapin A."/>
            <person name="Katoh M."/>
            <person name="Kawasawa Y."/>
            <person name="Kelso J."/>
            <person name="Kitamura H."/>
            <person name="Kitano H."/>
            <person name="Kollias G."/>
            <person name="Krishnan S.P."/>
            <person name="Kruger A."/>
            <person name="Kummerfeld S.K."/>
            <person name="Kurochkin I.V."/>
            <person name="Lareau L.F."/>
            <person name="Lazarevic D."/>
            <person name="Lipovich L."/>
            <person name="Liu J."/>
            <person name="Liuni S."/>
            <person name="McWilliam S."/>
            <person name="Madan Babu M."/>
            <person name="Madera M."/>
            <person name="Marchionni L."/>
            <person name="Matsuda H."/>
            <person name="Matsuzawa S."/>
            <person name="Miki H."/>
            <person name="Mignone F."/>
            <person name="Miyake S."/>
            <person name="Morris K."/>
            <person name="Mottagui-Tabar S."/>
            <person name="Mulder N."/>
            <person name="Nakano N."/>
            <person name="Nakauchi H."/>
            <person name="Ng P."/>
            <person name="Nilsson R."/>
            <person name="Nishiguchi S."/>
            <person name="Nishikawa S."/>
            <person name="Nori F."/>
            <person name="Ohara O."/>
            <person name="Okazaki Y."/>
            <person name="Orlando V."/>
            <person name="Pang K.C."/>
            <person name="Pavan W.J."/>
            <person name="Pavesi G."/>
            <person name="Pesole G."/>
            <person name="Petrovsky N."/>
            <person name="Piazza S."/>
            <person name="Reed J."/>
            <person name="Reid J.F."/>
            <person name="Ring B.Z."/>
            <person name="Ringwald M."/>
            <person name="Rost B."/>
            <person name="Ruan Y."/>
            <person name="Salzberg S.L."/>
            <person name="Sandelin A."/>
            <person name="Schneider C."/>
            <person name="Schoenbach C."/>
            <person name="Sekiguchi K."/>
            <person name="Semple C.A."/>
            <person name="Seno S."/>
            <person name="Sessa L."/>
            <person name="Sheng Y."/>
            <person name="Shibata Y."/>
            <person name="Shimada H."/>
            <person name="Shimada K."/>
            <person name="Silva D."/>
            <person name="Sinclair B."/>
            <person name="Sperling S."/>
            <person name="Stupka E."/>
            <person name="Sugiura K."/>
            <person name="Sultana R."/>
            <person name="Takenaka Y."/>
            <person name="Taki K."/>
            <person name="Tammoja K."/>
            <person name="Tan S.L."/>
            <person name="Tang S."/>
            <person name="Taylor M.S."/>
            <person name="Tegner J."/>
            <person name="Teichmann S.A."/>
            <person name="Ueda H.R."/>
            <person name="van Nimwegen E."/>
            <person name="Verardo R."/>
            <person name="Wei C.L."/>
            <person name="Yagi K."/>
            <person name="Yamanishi H."/>
            <person name="Zabarovsky E."/>
            <person name="Zhu S."/>
            <person name="Zimmer A."/>
            <person name="Hide W."/>
            <person name="Bult C."/>
            <person name="Grimmond S.M."/>
            <person name="Teasdale R.D."/>
            <person name="Liu E.T."/>
            <person name="Brusic V."/>
            <person name="Quackenbush J."/>
            <person name="Wahlestedt C."/>
            <person name="Mattick J.S."/>
            <person name="Hume D.A."/>
            <person name="Kai C."/>
            <person name="Sasaki D."/>
            <person name="Tomaru Y."/>
            <person name="Fukuda S."/>
            <person name="Kanamori-Katayama M."/>
            <person name="Suzuki M."/>
            <person name="Aoki J."/>
            <person name="Arakawa T."/>
            <person name="Iida J."/>
            <person name="Imamura K."/>
            <person name="Itoh M."/>
            <person name="Kato T."/>
            <person name="Kawaji H."/>
            <person name="Kawagashira N."/>
            <person name="Kawashima T."/>
            <person name="Kojima M."/>
            <person name="Kondo S."/>
            <person name="Konno H."/>
            <person name="Nakano K."/>
            <person name="Ninomiya N."/>
            <person name="Nishio T."/>
            <person name="Okada M."/>
            <person name="Plessy C."/>
            <person name="Shibata K."/>
            <person name="Shiraki T."/>
            <person name="Suzuki S."/>
            <person name="Tagami M."/>
            <person name="Waki K."/>
            <person name="Watahiki A."/>
            <person name="Okamura-Oho Y."/>
            <person name="Suzuki H."/>
            <person name="Kawai J."/>
            <person name="Hayashizaki Y."/>
        </authorList>
    </citation>
    <scope>NUCLEOTIDE SEQUENCE [LARGE SCALE MRNA] (ISOFORM 2)</scope>
    <source>
        <strain>C57BL/6J</strain>
        <tissue>Liver</tissue>
    </source>
</reference>
<reference key="5">
    <citation type="journal article" date="2003" name="Nat. Struct. Biol.">
        <title>Structure and regulation of the cAMP-binding domains of Epac2.</title>
        <authorList>
            <person name="Rehmann H."/>
            <person name="Prakash B."/>
            <person name="Wolf E."/>
            <person name="Rueppel A."/>
            <person name="De Rooij J."/>
            <person name="Bos J.L."/>
            <person name="Wittinghofer A."/>
        </authorList>
    </citation>
    <scope>X-RAY CRYSTALLOGRAPHY (2.5 ANGSTROMS) OF 1-463</scope>
</reference>
<reference key="6">
    <citation type="journal article" date="2008" name="Nature">
        <title>Structure of Epac2 in complex with a cyclic AMP analogue and RAP1B.</title>
        <authorList>
            <person name="Rehmann H."/>
            <person name="Arias-Palomo E."/>
            <person name="Hadders M.A."/>
            <person name="Schwede F."/>
            <person name="Llorca O."/>
            <person name="Bos J.L."/>
        </authorList>
    </citation>
    <scope>X-RAY CRYSTALLOGRAPHY (2.2 ANGSTROMS) OF 324-1011 IN COMPLEX WITH CAMP ANALOG AND RAP1B</scope>
    <scope>SUBUNIT</scope>
    <scope>MUTAGENESIS OF LEU-467; TYR-498 AND TYR-569</scope>
</reference>
<sequence>MVAAHAAHSQSSAEWIACLDKRPLERSSEDVDIIFTRLKGVKAFEKFHPNLLRQICLCGYYENLEKGITLFRQGDIGTNWYAVLAGSLDVKVSETSSHQDAVTICTLGIGTAFGESILDNTPRHATIVTRESSELLRIEQEDFKALWEKYRQYMAGLLAPPYGVMETGSNNDRIPDKENTPLIEPHVPLRPAHTITKVPSEKILRAGKILRIAILSRAPHMIRDRKYHLKTYRQCCVGTELVDWMIQQTSCVHSRTQAVGMWQVLLEDGVLNHVDQERHFQDKYLFYRFLDDEREDAPLPTEEEKKECDEELQDTMLLLSQMGPDAHMRMILRKPPGQRTVDDLEIIYDELLHIKALSHLSTTVKRELAGVLIFESHAKGGTVLFNQGEEGTSWYIILKGSVNVVIYGKGVVCTLHEGDDFGKLALVNDAPRAASIVLREDNCHFLRVDKEDFNRILRDVEANTVRLKEHDQDVLVLEKVPAGNRAANQGNSQPQQKYTVMSGTPEKILEHFLETIRLEPSLNEATDSVLNDFVMMHCVFMPNTQLCPALVAHYHAQPSQGTEQERMDYALNNKRRVIRLVLQWAAMYGDLLQEDDVAMAFLEEFYVSVSDDARMMAAFKEQLPELEKIVKQISEDAKAPQKKHKVLLQQFNTGDERAQKRQPIRGSDEVLFKVYCIDHTYTTIRVPVAASVKEVISAVADKLGSGEGLIIVKMNSGGEKVVLKSNDVSVFTTLTINGRLFACPREQFDSLTPLPEQEGPTTGTVGTFELMSSKDLAYQMTTYDWELFNCVHELELIYHTFGRHNFKKTTANLDLFLRRFNEIQFWVVTEVCLCSQLSKRVQLLKKFIKIAAHCKEYKNLNSFFAIVMGLSNVAVSRLALTWEKLPSKFKKFYAEFESLMDPSRNHRAYRLTAAKLEPPLIPFMPLLIKDMTFTHEGNKTFIDNLVNFEKMRMIANTARTVRYYRSQPFNPDAAQANKNHQDVRSYVRQLNVIDNQRTLSQMSHRLEPRRP</sequence>
<proteinExistence type="evidence at protein level"/>
<comment type="function">
    <text evidence="6">Guanine nucleotide exchange factor (GEF) for RAP1A, RAP1B and RAP2A small GTPases that is activated by binding cAMP. Seems not to activate RAB3A. Involved in cAMP-dependent, PKA-independent exocytosis through interaction with RIMS2.</text>
</comment>
<comment type="subunit">
    <text evidence="6 7">Interacts with RAP1B, RIMS1 and RIMS2. Probably part of a complex with RIMS2 and GTP-activated RAB3A.</text>
</comment>
<comment type="interaction">
    <interactant intactId="EBI-772212">
        <id>Q9EQZ6</id>
    </interactant>
    <interactant intactId="EBI-350145">
        <id>P01112</id>
        <label>HRAS</label>
    </interactant>
    <organismsDiffer>true</organismsDiffer>
    <experiments>3</experiments>
</comment>
<comment type="interaction">
    <interactant intactId="EBI-15566495">
        <id>Q9EQZ6-3</id>
    </interactant>
    <interactant intactId="EBI-358143">
        <id>P61224</id>
        <label>RAP1B</label>
    </interactant>
    <organismsDiffer>true</organismsDiffer>
    <experiments>3</experiments>
</comment>
<comment type="subcellular location">
    <subcellularLocation>
        <location>Cytoplasm</location>
    </subcellularLocation>
    <subcellularLocation>
        <location evidence="1">Membrane</location>
        <topology evidence="1">Peripheral membrane protein</topology>
    </subcellularLocation>
</comment>
<comment type="alternative products">
    <event type="alternative promoter"/>
    <event type="alternative splicing"/>
    <isoform>
        <id>Q9EQZ6-1</id>
        <name>1</name>
        <sequence type="displayed"/>
    </isoform>
    <isoform>
        <id>Q9EQZ6-2</id>
        <name>2</name>
        <sequence type="described" ref="VSP_007614"/>
    </isoform>
    <isoform>
        <id>Q9EQZ6-3</id>
        <name>3</name>
        <sequence type="described" ref="VSP_007615"/>
    </isoform>
</comment>
<comment type="tissue specificity">
    <text evidence="6">Expressed in cerebellum, pituitary, adrenal gland and liver.</text>
</comment>
<comment type="domain">
    <text evidence="1">The N-terminal nucleotide phosphate binding region cAMP 1 has a much lower affinity for cAMP as compared to cAMP 2.</text>
</comment>
<comment type="domain">
    <text evidence="1">The DEP domain is involved in membrane localization independent from regulation by cAMP.</text>
</comment>
<comment type="miscellaneous">
    <molecule>Isoform 1</molecule>
    <text>Produced by alternative promoter usage.</text>
</comment>
<comment type="miscellaneous">
    <molecule>Isoform 2</molecule>
    <text evidence="11">Produced by alternative promoter usage.</text>
</comment>
<comment type="miscellaneous">
    <molecule>Isoform 3</molecule>
    <text evidence="11">Produced by alternative splicing of isoform 1.</text>
</comment>